<protein>
    <recommendedName>
        <fullName evidence="1">UDP-N-acetylenolpyruvoylglucosamine reductase</fullName>
        <ecNumber evidence="1">1.3.1.98</ecNumber>
    </recommendedName>
    <alternativeName>
        <fullName evidence="1">UDP-N-acetylmuramate dehydrogenase</fullName>
    </alternativeName>
</protein>
<organism>
    <name type="scientific">Thermus thermophilus (strain ATCC BAA-163 / DSM 7039 / HB27)</name>
    <dbReference type="NCBI Taxonomy" id="262724"/>
    <lineage>
        <taxon>Bacteria</taxon>
        <taxon>Thermotogati</taxon>
        <taxon>Deinococcota</taxon>
        <taxon>Deinococci</taxon>
        <taxon>Thermales</taxon>
        <taxon>Thermaceae</taxon>
        <taxon>Thermus</taxon>
    </lineage>
</organism>
<sequence>MKVERVLLKDYTTLGVGGPAELWTVETREELKRATEAPYRVLGNGSNLLVLDEGVPERVIRLAGEFQTYDLKGWVGAGTLLPLLVQEAARAGLSGLEGLLGIPAQVGGAVKMNAGTRFGEMADALEAVEVFHDGAFHVYCPEELGFGYRKSHLPPGGIVTRVRLKLKERPKEEILRRMAEVDRARKGQPKRKSAGCAFKNPPGQSAGRLIDERGLKGLRVGDAMISLEHGNFIVNLGQARAKDVLELVRRVQEELPLELEWEVWP</sequence>
<name>MURB_THET2</name>
<gene>
    <name evidence="1" type="primary">murB</name>
    <name type="ordered locus">TT_C0721</name>
</gene>
<accession>Q72JP7</accession>
<evidence type="ECO:0000255" key="1">
    <source>
        <dbReference type="HAMAP-Rule" id="MF_00037"/>
    </source>
</evidence>
<evidence type="ECO:0000256" key="2">
    <source>
        <dbReference type="SAM" id="MobiDB-lite"/>
    </source>
</evidence>
<comment type="function">
    <text evidence="1">Cell wall formation.</text>
</comment>
<comment type="catalytic activity">
    <reaction evidence="1">
        <text>UDP-N-acetyl-alpha-D-muramate + NADP(+) = UDP-N-acetyl-3-O-(1-carboxyvinyl)-alpha-D-glucosamine + NADPH + H(+)</text>
        <dbReference type="Rhea" id="RHEA:12248"/>
        <dbReference type="ChEBI" id="CHEBI:15378"/>
        <dbReference type="ChEBI" id="CHEBI:57783"/>
        <dbReference type="ChEBI" id="CHEBI:58349"/>
        <dbReference type="ChEBI" id="CHEBI:68483"/>
        <dbReference type="ChEBI" id="CHEBI:70757"/>
        <dbReference type="EC" id="1.3.1.98"/>
    </reaction>
</comment>
<comment type="cofactor">
    <cofactor evidence="1">
        <name>FAD</name>
        <dbReference type="ChEBI" id="CHEBI:57692"/>
    </cofactor>
</comment>
<comment type="pathway">
    <text evidence="1">Cell wall biogenesis; peptidoglycan biosynthesis.</text>
</comment>
<comment type="subcellular location">
    <subcellularLocation>
        <location evidence="1">Cytoplasm</location>
    </subcellularLocation>
</comment>
<comment type="similarity">
    <text evidence="1">Belongs to the MurB family.</text>
</comment>
<dbReference type="EC" id="1.3.1.98" evidence="1"/>
<dbReference type="EMBL" id="AE017221">
    <property type="protein sequence ID" value="AAS81069.1"/>
    <property type="molecule type" value="Genomic_DNA"/>
</dbReference>
<dbReference type="RefSeq" id="WP_011173160.1">
    <property type="nucleotide sequence ID" value="NC_005835.1"/>
</dbReference>
<dbReference type="SMR" id="Q72JP7"/>
<dbReference type="KEGG" id="tth:TT_C0721"/>
<dbReference type="eggNOG" id="COG0812">
    <property type="taxonomic scope" value="Bacteria"/>
</dbReference>
<dbReference type="HOGENOM" id="CLU_035304_1_1_0"/>
<dbReference type="OrthoDB" id="9804753at2"/>
<dbReference type="UniPathway" id="UPA00219"/>
<dbReference type="Proteomes" id="UP000000592">
    <property type="component" value="Chromosome"/>
</dbReference>
<dbReference type="GO" id="GO:0005829">
    <property type="term" value="C:cytosol"/>
    <property type="evidence" value="ECO:0007669"/>
    <property type="project" value="TreeGrafter"/>
</dbReference>
<dbReference type="GO" id="GO:0071949">
    <property type="term" value="F:FAD binding"/>
    <property type="evidence" value="ECO:0007669"/>
    <property type="project" value="InterPro"/>
</dbReference>
<dbReference type="GO" id="GO:0008762">
    <property type="term" value="F:UDP-N-acetylmuramate dehydrogenase activity"/>
    <property type="evidence" value="ECO:0007669"/>
    <property type="project" value="UniProtKB-UniRule"/>
</dbReference>
<dbReference type="GO" id="GO:0051301">
    <property type="term" value="P:cell division"/>
    <property type="evidence" value="ECO:0007669"/>
    <property type="project" value="UniProtKB-KW"/>
</dbReference>
<dbReference type="GO" id="GO:0071555">
    <property type="term" value="P:cell wall organization"/>
    <property type="evidence" value="ECO:0007669"/>
    <property type="project" value="UniProtKB-KW"/>
</dbReference>
<dbReference type="GO" id="GO:0009252">
    <property type="term" value="P:peptidoglycan biosynthetic process"/>
    <property type="evidence" value="ECO:0007669"/>
    <property type="project" value="UniProtKB-UniRule"/>
</dbReference>
<dbReference type="GO" id="GO:0008360">
    <property type="term" value="P:regulation of cell shape"/>
    <property type="evidence" value="ECO:0007669"/>
    <property type="project" value="UniProtKB-KW"/>
</dbReference>
<dbReference type="Gene3D" id="3.30.465.10">
    <property type="match status" value="1"/>
</dbReference>
<dbReference type="Gene3D" id="3.90.78.10">
    <property type="entry name" value="UDP-N-acetylenolpyruvoylglucosamine reductase, C-terminal domain"/>
    <property type="match status" value="1"/>
</dbReference>
<dbReference type="Gene3D" id="3.30.43.10">
    <property type="entry name" value="Uridine Diphospho-n-acetylenolpyruvylglucosamine Reductase, domain 2"/>
    <property type="match status" value="1"/>
</dbReference>
<dbReference type="HAMAP" id="MF_00037">
    <property type="entry name" value="MurB"/>
    <property type="match status" value="1"/>
</dbReference>
<dbReference type="InterPro" id="IPR016166">
    <property type="entry name" value="FAD-bd_PCMH"/>
</dbReference>
<dbReference type="InterPro" id="IPR036318">
    <property type="entry name" value="FAD-bd_PCMH-like_sf"/>
</dbReference>
<dbReference type="InterPro" id="IPR016167">
    <property type="entry name" value="FAD-bd_PCMH_sub1"/>
</dbReference>
<dbReference type="InterPro" id="IPR016169">
    <property type="entry name" value="FAD-bd_PCMH_sub2"/>
</dbReference>
<dbReference type="InterPro" id="IPR003170">
    <property type="entry name" value="MurB"/>
</dbReference>
<dbReference type="InterPro" id="IPR011601">
    <property type="entry name" value="MurB_C"/>
</dbReference>
<dbReference type="InterPro" id="IPR036635">
    <property type="entry name" value="MurB_C_sf"/>
</dbReference>
<dbReference type="InterPro" id="IPR006094">
    <property type="entry name" value="Oxid_FAD_bind_N"/>
</dbReference>
<dbReference type="NCBIfam" id="TIGR00179">
    <property type="entry name" value="murB"/>
    <property type="match status" value="1"/>
</dbReference>
<dbReference type="NCBIfam" id="NF011245">
    <property type="entry name" value="PRK14651.1"/>
    <property type="match status" value="1"/>
</dbReference>
<dbReference type="PANTHER" id="PTHR21071">
    <property type="entry name" value="UDP-N-ACETYLENOLPYRUVOYLGLUCOSAMINE REDUCTASE"/>
    <property type="match status" value="1"/>
</dbReference>
<dbReference type="PANTHER" id="PTHR21071:SF4">
    <property type="entry name" value="UDP-N-ACETYLENOLPYRUVOYLGLUCOSAMINE REDUCTASE"/>
    <property type="match status" value="1"/>
</dbReference>
<dbReference type="Pfam" id="PF01565">
    <property type="entry name" value="FAD_binding_4"/>
    <property type="match status" value="1"/>
</dbReference>
<dbReference type="Pfam" id="PF02873">
    <property type="entry name" value="MurB_C"/>
    <property type="match status" value="1"/>
</dbReference>
<dbReference type="SUPFAM" id="SSF56176">
    <property type="entry name" value="FAD-binding/transporter-associated domain-like"/>
    <property type="match status" value="1"/>
</dbReference>
<dbReference type="SUPFAM" id="SSF56194">
    <property type="entry name" value="Uridine diphospho-N-Acetylenolpyruvylglucosamine reductase, MurB, C-terminal domain"/>
    <property type="match status" value="1"/>
</dbReference>
<dbReference type="PROSITE" id="PS51387">
    <property type="entry name" value="FAD_PCMH"/>
    <property type="match status" value="1"/>
</dbReference>
<feature type="chain" id="PRO_0000224732" description="UDP-N-acetylenolpyruvoylglucosamine reductase">
    <location>
        <begin position="1"/>
        <end position="265"/>
    </location>
</feature>
<feature type="domain" description="FAD-binding PCMH-type" evidence="1">
    <location>
        <begin position="15"/>
        <end position="169"/>
    </location>
</feature>
<feature type="region of interest" description="Disordered" evidence="2">
    <location>
        <begin position="182"/>
        <end position="203"/>
    </location>
</feature>
<feature type="active site" evidence="1">
    <location>
        <position position="149"/>
    </location>
</feature>
<feature type="active site" description="Proton donor" evidence="1">
    <location>
        <position position="196"/>
    </location>
</feature>
<keyword id="KW-0131">Cell cycle</keyword>
<keyword id="KW-0132">Cell division</keyword>
<keyword id="KW-0133">Cell shape</keyword>
<keyword id="KW-0961">Cell wall biogenesis/degradation</keyword>
<keyword id="KW-0963">Cytoplasm</keyword>
<keyword id="KW-0274">FAD</keyword>
<keyword id="KW-0285">Flavoprotein</keyword>
<keyword id="KW-0521">NADP</keyword>
<keyword id="KW-0560">Oxidoreductase</keyword>
<keyword id="KW-0573">Peptidoglycan synthesis</keyword>
<reference key="1">
    <citation type="journal article" date="2004" name="Nat. Biotechnol.">
        <title>The genome sequence of the extreme thermophile Thermus thermophilus.</title>
        <authorList>
            <person name="Henne A."/>
            <person name="Brueggemann H."/>
            <person name="Raasch C."/>
            <person name="Wiezer A."/>
            <person name="Hartsch T."/>
            <person name="Liesegang H."/>
            <person name="Johann A."/>
            <person name="Lienard T."/>
            <person name="Gohl O."/>
            <person name="Martinez-Arias R."/>
            <person name="Jacobi C."/>
            <person name="Starkuviene V."/>
            <person name="Schlenczeck S."/>
            <person name="Dencker S."/>
            <person name="Huber R."/>
            <person name="Klenk H.-P."/>
            <person name="Kramer W."/>
            <person name="Merkl R."/>
            <person name="Gottschalk G."/>
            <person name="Fritz H.-J."/>
        </authorList>
    </citation>
    <scope>NUCLEOTIDE SEQUENCE [LARGE SCALE GENOMIC DNA]</scope>
    <source>
        <strain>ATCC BAA-163 / DSM 7039 / HB27</strain>
    </source>
</reference>
<proteinExistence type="inferred from homology"/>